<gene>
    <name type="primary">DME</name>
    <name type="ordered locus">At5g04560/At5g04570/At5g04580</name>
    <name type="ORF">T32M21.160/T32M21.170/T32M21.180</name>
</gene>
<organism>
    <name type="scientific">Arabidopsis thaliana</name>
    <name type="common">Mouse-ear cress</name>
    <dbReference type="NCBI Taxonomy" id="3702"/>
    <lineage>
        <taxon>Eukaryota</taxon>
        <taxon>Viridiplantae</taxon>
        <taxon>Streptophyta</taxon>
        <taxon>Embryophyta</taxon>
        <taxon>Tracheophyta</taxon>
        <taxon>Spermatophyta</taxon>
        <taxon>Magnoliopsida</taxon>
        <taxon>eudicotyledons</taxon>
        <taxon>Gunneridae</taxon>
        <taxon>Pentapetalae</taxon>
        <taxon>rosids</taxon>
        <taxon>malvids</taxon>
        <taxon>Brassicales</taxon>
        <taxon>Brassicaceae</taxon>
        <taxon>Camelineae</taxon>
        <taxon>Arabidopsis</taxon>
    </lineage>
</organism>
<reference key="1">
    <citation type="journal article" date="2002" name="Cell">
        <title>DEMETER, a DNA glycosylase domain protein, is required for endosperm gene imprinting and seed viability in Arabidopsis.</title>
        <authorList>
            <person name="Choi Y."/>
            <person name="Gehring M."/>
            <person name="Johnson L."/>
            <person name="Hannon M."/>
            <person name="Harada J.J."/>
            <person name="Goldberg R.B."/>
            <person name="Jacobsen S.E."/>
            <person name="Fischer R.L."/>
        </authorList>
    </citation>
    <scope>NUCLEOTIDE SEQUENCE [MRNA] (ISOFORM 1)</scope>
    <scope>FUNCTION</scope>
    <scope>CHARACTERIZATION</scope>
    <source>
        <strain>cv. Columbia</strain>
        <tissue>Flower</tissue>
    </source>
</reference>
<reference key="2">
    <citation type="journal article" date="2006" name="Proc. Natl. Acad. Sci. U.S.A.">
        <title>DEMETER and REPRESSOR OF SILENCING 1 encode 5-methylcytosine DNA glycosylases.</title>
        <authorList>
            <person name="Morales-Ruiz T."/>
            <person name="Ortega-Galisteo A.P."/>
            <person name="Ponferrada-Marin M.I."/>
            <person name="Martinez-Macias M.I."/>
            <person name="Ariza R.R."/>
            <person name="Roldan-Arjona T."/>
        </authorList>
    </citation>
    <scope>NUCLEOTIDE SEQUENCE [MRNA] (ISOFORM 3)</scope>
    <scope>FUNCTION</scope>
    <source>
        <strain>cv. Columbia</strain>
    </source>
</reference>
<reference key="3">
    <citation type="journal article" date="2000" name="Nature">
        <title>Sequence and analysis of chromosome 5 of the plant Arabidopsis thaliana.</title>
        <authorList>
            <person name="Tabata S."/>
            <person name="Kaneko T."/>
            <person name="Nakamura Y."/>
            <person name="Kotani H."/>
            <person name="Kato T."/>
            <person name="Asamizu E."/>
            <person name="Miyajima N."/>
            <person name="Sasamoto S."/>
            <person name="Kimura T."/>
            <person name="Hosouchi T."/>
            <person name="Kawashima K."/>
            <person name="Kohara M."/>
            <person name="Matsumoto M."/>
            <person name="Matsuno A."/>
            <person name="Muraki A."/>
            <person name="Nakayama S."/>
            <person name="Nakazaki N."/>
            <person name="Naruo K."/>
            <person name="Okumura S."/>
            <person name="Shinpo S."/>
            <person name="Takeuchi C."/>
            <person name="Wada T."/>
            <person name="Watanabe A."/>
            <person name="Yamada M."/>
            <person name="Yasuda M."/>
            <person name="Sato S."/>
            <person name="de la Bastide M."/>
            <person name="Huang E."/>
            <person name="Spiegel L."/>
            <person name="Gnoj L."/>
            <person name="O'Shaughnessy A."/>
            <person name="Preston R."/>
            <person name="Habermann K."/>
            <person name="Murray J."/>
            <person name="Johnson D."/>
            <person name="Rohlfing T."/>
            <person name="Nelson J."/>
            <person name="Stoneking T."/>
            <person name="Pepin K."/>
            <person name="Spieth J."/>
            <person name="Sekhon M."/>
            <person name="Armstrong J."/>
            <person name="Becker M."/>
            <person name="Belter E."/>
            <person name="Cordum H."/>
            <person name="Cordes M."/>
            <person name="Courtney L."/>
            <person name="Courtney W."/>
            <person name="Dante M."/>
            <person name="Du H."/>
            <person name="Edwards J."/>
            <person name="Fryman J."/>
            <person name="Haakensen B."/>
            <person name="Lamar E."/>
            <person name="Latreille P."/>
            <person name="Leonard S."/>
            <person name="Meyer R."/>
            <person name="Mulvaney E."/>
            <person name="Ozersky P."/>
            <person name="Riley A."/>
            <person name="Strowmatt C."/>
            <person name="Wagner-McPherson C."/>
            <person name="Wollam A."/>
            <person name="Yoakum M."/>
            <person name="Bell M."/>
            <person name="Dedhia N."/>
            <person name="Parnell L."/>
            <person name="Shah R."/>
            <person name="Rodriguez M."/>
            <person name="Hoon See L."/>
            <person name="Vil D."/>
            <person name="Baker J."/>
            <person name="Kirchoff K."/>
            <person name="Toth K."/>
            <person name="King L."/>
            <person name="Bahret A."/>
            <person name="Miller B."/>
            <person name="Marra M.A."/>
            <person name="Martienssen R."/>
            <person name="McCombie W.R."/>
            <person name="Wilson R.K."/>
            <person name="Murphy G."/>
            <person name="Bancroft I."/>
            <person name="Volckaert G."/>
            <person name="Wambutt R."/>
            <person name="Duesterhoeft A."/>
            <person name="Stiekema W."/>
            <person name="Pohl T."/>
            <person name="Entian K.-D."/>
            <person name="Terryn N."/>
            <person name="Hartley N."/>
            <person name="Bent E."/>
            <person name="Johnson S."/>
            <person name="Langham S.-A."/>
            <person name="McCullagh B."/>
            <person name="Robben J."/>
            <person name="Grymonprez B."/>
            <person name="Zimmermann W."/>
            <person name="Ramsperger U."/>
            <person name="Wedler H."/>
            <person name="Balke K."/>
            <person name="Wedler E."/>
            <person name="Peters S."/>
            <person name="van Staveren M."/>
            <person name="Dirkse W."/>
            <person name="Mooijman P."/>
            <person name="Klein Lankhorst R."/>
            <person name="Weitzenegger T."/>
            <person name="Bothe G."/>
            <person name="Rose M."/>
            <person name="Hauf J."/>
            <person name="Berneiser S."/>
            <person name="Hempel S."/>
            <person name="Feldpausch M."/>
            <person name="Lamberth S."/>
            <person name="Villarroel R."/>
            <person name="Gielen J."/>
            <person name="Ardiles W."/>
            <person name="Bents O."/>
            <person name="Lemcke K."/>
            <person name="Kolesov G."/>
            <person name="Mayer K.F.X."/>
            <person name="Rudd S."/>
            <person name="Schoof H."/>
            <person name="Schueller C."/>
            <person name="Zaccaria P."/>
            <person name="Mewes H.-W."/>
            <person name="Bevan M."/>
            <person name="Fransz P.F."/>
        </authorList>
    </citation>
    <scope>NUCLEOTIDE SEQUENCE [LARGE SCALE GENOMIC DNA]</scope>
    <source>
        <strain>cv. Columbia</strain>
    </source>
</reference>
<reference key="4">
    <citation type="journal article" date="2017" name="Plant J.">
        <title>Araport11: a complete reannotation of the Arabidopsis thaliana reference genome.</title>
        <authorList>
            <person name="Cheng C.Y."/>
            <person name="Krishnakumar V."/>
            <person name="Chan A.P."/>
            <person name="Thibaud-Nissen F."/>
            <person name="Schobel S."/>
            <person name="Town C.D."/>
        </authorList>
    </citation>
    <scope>GENOME REANNOTATION</scope>
    <source>
        <strain>cv. Columbia</strain>
    </source>
</reference>
<reference key="5">
    <citation type="journal article" date="2002" name="Science">
        <title>Functional annotation of a full-length Arabidopsis cDNA collection.</title>
        <authorList>
            <person name="Seki M."/>
            <person name="Narusaka M."/>
            <person name="Kamiya A."/>
            <person name="Ishida J."/>
            <person name="Satou M."/>
            <person name="Sakurai T."/>
            <person name="Nakajima M."/>
            <person name="Enju A."/>
            <person name="Akiyama K."/>
            <person name="Oono Y."/>
            <person name="Muramatsu M."/>
            <person name="Hayashizaki Y."/>
            <person name="Kawai J."/>
            <person name="Carninci P."/>
            <person name="Itoh M."/>
            <person name="Ishii Y."/>
            <person name="Arakawa T."/>
            <person name="Shibata K."/>
            <person name="Shinagawa A."/>
            <person name="Shinozaki K."/>
        </authorList>
    </citation>
    <scope>NUCLEOTIDE SEQUENCE [LARGE SCALE MRNA] (ISOFORM 2)</scope>
    <source>
        <strain>cv. Columbia</strain>
    </source>
</reference>
<reference key="6">
    <citation type="journal article" date="2003" name="Science">
        <title>Empirical analysis of transcriptional activity in the Arabidopsis genome.</title>
        <authorList>
            <person name="Yamada K."/>
            <person name="Lim J."/>
            <person name="Dale J.M."/>
            <person name="Chen H."/>
            <person name="Shinn P."/>
            <person name="Palm C.J."/>
            <person name="Southwick A.M."/>
            <person name="Wu H.C."/>
            <person name="Kim C.J."/>
            <person name="Nguyen M."/>
            <person name="Pham P.K."/>
            <person name="Cheuk R.F."/>
            <person name="Karlin-Newmann G."/>
            <person name="Liu S.X."/>
            <person name="Lam B."/>
            <person name="Sakano H."/>
            <person name="Wu T."/>
            <person name="Yu G."/>
            <person name="Miranda M."/>
            <person name="Quach H.L."/>
            <person name="Tripp M."/>
            <person name="Chang C.H."/>
            <person name="Lee J.M."/>
            <person name="Toriumi M.J."/>
            <person name="Chan M.M."/>
            <person name="Tang C.C."/>
            <person name="Onodera C.S."/>
            <person name="Deng J.M."/>
            <person name="Akiyama K."/>
            <person name="Ansari Y."/>
            <person name="Arakawa T."/>
            <person name="Banh J."/>
            <person name="Banno F."/>
            <person name="Bowser L."/>
            <person name="Brooks S.Y."/>
            <person name="Carninci P."/>
            <person name="Chao Q."/>
            <person name="Choy N."/>
            <person name="Enju A."/>
            <person name="Goldsmith A.D."/>
            <person name="Gurjal M."/>
            <person name="Hansen N.F."/>
            <person name="Hayashizaki Y."/>
            <person name="Johnson-Hopson C."/>
            <person name="Hsuan V.W."/>
            <person name="Iida K."/>
            <person name="Karnes M."/>
            <person name="Khan S."/>
            <person name="Koesema E."/>
            <person name="Ishida J."/>
            <person name="Jiang P.X."/>
            <person name="Jones T."/>
            <person name="Kawai J."/>
            <person name="Kamiya A."/>
            <person name="Meyers C."/>
            <person name="Nakajima M."/>
            <person name="Narusaka M."/>
            <person name="Seki M."/>
            <person name="Sakurai T."/>
            <person name="Satou M."/>
            <person name="Tamse R."/>
            <person name="Vaysberg M."/>
            <person name="Wallender E.K."/>
            <person name="Wong C."/>
            <person name="Yamamura Y."/>
            <person name="Yuan S."/>
            <person name="Shinozaki K."/>
            <person name="Davis R.W."/>
            <person name="Theologis A."/>
            <person name="Ecker J.R."/>
        </authorList>
    </citation>
    <scope>NUCLEOTIDE SEQUENCE [LARGE SCALE MRNA] (ISOFORM 2)</scope>
    <source>
        <strain>cv. Columbia</strain>
    </source>
</reference>
<reference key="7">
    <citation type="journal article" date="2004" name="Proc. Natl. Acad. Sci. U.S.A.">
        <title>An invariant aspartic acid in the DNA glycosylase domain of DEMETER is necessary for transcriptional activation of the imprinted MEDEA gene.</title>
        <authorList>
            <person name="Choi Y."/>
            <person name="Harada J.J."/>
            <person name="Goldberg R.B."/>
            <person name="Fischer R.L."/>
        </authorList>
    </citation>
    <scope>FUNCTION</scope>
    <scope>MUTAGENESIS OF ASP-1562</scope>
</reference>
<accession>Q8LK56</accession>
<accession>Q1WEY5</accession>
<accession>Q84TL4</accession>
<accession>Q9LZ67</accession>
<accession>Q9LZ68</accession>
<accession>Q9LZ69</accession>
<sequence>MNSRADPGDRYFRVPLENQTQQEFMGSWIPFTPKKPRSSLMVDERVINQDLNGFPGGEFVDRGFCNTGVDHNGVFDHGAHQGVTNLSMMINSLAGSHAQAWSNSERDLLGRSEVTSPLAPVIRNTTGNVEPVNGNFTSDVGMVNGPFTQSGTSQAGYNEFELDDLLNPDQMPFSFTSLLSGGDSLFKVRQYGPPACNKPLYNLNSPIRREAVGSVCESSFQYVPSTPSLFRTGEKTGFLEQIVTTTGHEIPEPKSDKSMQSIMDSSAVNATEATEQNDGSRQDVLEFDLNKTPQQKPSKRKRKFMPKVVVEGKPKRKPRKPAELPKVVVEGKPKRKPRKAATQEKVKSKETGSAKKKNLKESATKKPANVGDMSNKSPEVTLKSCRKALNFDLENPGDARQGDSESEIVQNSSGANSFSEIRDAIGGTNGSFLDSVSQIDKTNGLGAMNQPLEVSMGNQPDKLSTGAKLARDQQPDLLTRNQQCQFPVATQNTQFPMENQQAWLQMKNQLIGFPFGNQQPRMTIRNQQPCLAMGNQQPMYLIGTPRPALVSGNQQLGGPQGNKRPIFLNHQTCLPAGNQLYGSPTDMHQLVMSTGGQQHGLLIKNQQPGSLIRGQQPCVPLIDQQPATPKGFTHLNQMVATSMSSPGLRPHSQSQVPTTYLHVESVSRILNGTTGTCQRSRAPAYDSLQQDIHQGNKYILSHEISNGNGCKKALPQNSSLPTPIMAKLEEARGSKRQYHRAMGQTEKHDLNLAQQIAQSQDVERHNSSTCVEYLDAAKKTKIQKVVQENLHGMPPEVIEIEDDPTDGARKGKNTASISKGASKGNSSPVKKTAEKEKCIVPKTPAKKGRAGRKKSVPPPAHASEIQLWQPTPPKTPLSRSKPKGKGRKSIQDSGKARGPSGELLCQDSIAEIIYRMQNLYLGDKEREQEQNAMVLYKGDGALVPYESKKRKPRPKVDIDDETTRIWNLLMGKGDEKEGDEEKDKKKEKWWEEERRVFRGRADSFIARMHLVQGDRRFSPWKGSVVDSVIGVFLTQNVSDHLSSSAFMSLAARFPPKLSSSREDERNVRSVVVEDPEGCILNLNEIPSWQEKVQHPSDMEVSGVDSGSKEQLRDCSNSGIERFNFLEKSIQNLEEEVLSSQDSFDPAIFQSCGRVGSCSCSKSDAEFPTTRCETKTVSGTSQSVQTGSPNLSDEICLQGNERPHLYEGSGDVQKQETTNVAQKKPDLEKTMNWKDSVCFGQPRNDTNWQTTPSSSYEQCATRQPHVLDIEDFGMQGEGLGYSWMSISPRVDRVKNKNVPRRFFRQGGSVPREFTGQIIPSTPHELPGMGLSGSSSAVQEHQDDTQHNQQDEMNKASHLQKTFLDLLNSSEECLTRQSSTKQNITDGCLPRDRTAEDVVDPLSNNSSLQNILVESNSSNKEQTAVEYKETNATILREMKGTLADGKKPTSQWDSLRKDVEGNEGRQERNKNNMDSIDYEAIRRASISEISEAIKERGMNNMLAVRIKDFLERIVKDHGGIDLEWLRESPPDKAKDYLLSIRGLGLKSVECVRLLTLHNLAFPVDTNVGRIAVRMGWVPLQPLPESLQLHLLELYPVLESIQKFLWPRLCKLDQRTLYELHYQLITFGKVFCTKSRPNCNACPMRGECRHFASAYASARLALPAPEERSLTSATIPVPPESYPPVAIPMIELPLPLEKSLASGAPSNRENCEPIIEEPASPGQECTEITESDIEDAYYNEDPDEIPTIKLNIEQFGMTLREHMERNMELQEGDMSKALVALHPTTTSIPTPKLKNISRLRTEHQVYELPDSHRLLDGMDKREPDDPSPYLLAIWTPGETANSAQPPEQKCGGKASGKMCFDETCSECNSLREANSQTVRGTLLIPCRTAMRGSFPLNGTYFQVNELFADHESSLKPIDVPRDWIWDLPRRTVYFGTSVTSIFRGLSTEQIQFCFWKGFVCVRGFEQKTRAPRPLMARLHFPASKLKNNKT</sequence>
<feature type="chain" id="PRO_0000102245" description="Transcriptional activator DEMETER">
    <location>
        <begin position="1"/>
        <end position="1987"/>
    </location>
</feature>
<feature type="region of interest" description="Disordered" evidence="2">
    <location>
        <begin position="246"/>
        <end position="378"/>
    </location>
</feature>
<feature type="region of interest" description="Disordered" evidence="2">
    <location>
        <begin position="392"/>
        <end position="415"/>
    </location>
</feature>
<feature type="region of interest" description="Disordered" evidence="2">
    <location>
        <begin position="793"/>
        <end position="901"/>
    </location>
</feature>
<feature type="region of interest" description="DEMETER">
    <location>
        <begin position="955"/>
        <end position="1054"/>
    </location>
</feature>
<feature type="region of interest" description="Disordered" evidence="2">
    <location>
        <begin position="1324"/>
        <end position="1351"/>
    </location>
</feature>
<feature type="region of interest" description="Disordered" evidence="2">
    <location>
        <begin position="1439"/>
        <end position="1471"/>
    </location>
</feature>
<feature type="compositionally biased region" description="Polar residues" evidence="2">
    <location>
        <begin position="258"/>
        <end position="277"/>
    </location>
</feature>
<feature type="compositionally biased region" description="Basic and acidic residues" evidence="2">
    <location>
        <begin position="341"/>
        <end position="364"/>
    </location>
</feature>
<feature type="compositionally biased region" description="Polar residues" evidence="2">
    <location>
        <begin position="813"/>
        <end position="829"/>
    </location>
</feature>
<feature type="compositionally biased region" description="Basic residues" evidence="2">
    <location>
        <begin position="844"/>
        <end position="855"/>
    </location>
</feature>
<feature type="compositionally biased region" description="Basic and acidic residues" evidence="2">
    <location>
        <begin position="1338"/>
        <end position="1351"/>
    </location>
</feature>
<feature type="compositionally biased region" description="Basic and acidic residues" evidence="2">
    <location>
        <begin position="1452"/>
        <end position="1469"/>
    </location>
</feature>
<feature type="binding site" evidence="1">
    <location>
        <position position="1629"/>
    </location>
    <ligand>
        <name>[4Fe-4S] cluster</name>
        <dbReference type="ChEBI" id="CHEBI:49883"/>
    </ligand>
</feature>
<feature type="binding site" evidence="1">
    <location>
        <position position="1636"/>
    </location>
    <ligand>
        <name>[4Fe-4S] cluster</name>
        <dbReference type="ChEBI" id="CHEBI:49883"/>
    </ligand>
</feature>
<feature type="binding site" evidence="1">
    <location>
        <position position="1639"/>
    </location>
    <ligand>
        <name>[4Fe-4S] cluster</name>
        <dbReference type="ChEBI" id="CHEBI:49883"/>
    </ligand>
</feature>
<feature type="binding site" evidence="1">
    <location>
        <position position="1645"/>
    </location>
    <ligand>
        <name>[4Fe-4S] cluster</name>
        <dbReference type="ChEBI" id="CHEBI:49883"/>
    </ligand>
</feature>
<feature type="splice variant" id="VSP_019283" description="In isoform 1." evidence="7">
    <location>
        <begin position="1"/>
        <end position="258"/>
    </location>
</feature>
<feature type="splice variant" id="VSP_007455" description="In isoform 2." evidence="6 8">
    <location>
        <begin position="259"/>
        <end position="1571"/>
    </location>
</feature>
<feature type="mutagenesis site" description="Loss of activity and abnormal MEA imprinting." evidence="4">
    <original>D</original>
    <variation>N</variation>
    <location>
        <position position="1562"/>
    </location>
</feature>
<feature type="sequence conflict" description="In Ref. 1; AAM77215." evidence="9" ref="1">
    <original>Y</original>
    <variation>F</variation>
    <location>
        <position position="1679"/>
    </location>
</feature>
<evidence type="ECO:0000250" key="1"/>
<evidence type="ECO:0000256" key="2">
    <source>
        <dbReference type="SAM" id="MobiDB-lite"/>
    </source>
</evidence>
<evidence type="ECO:0000269" key="3">
    <source>
    </source>
</evidence>
<evidence type="ECO:0000269" key="4">
    <source>
    </source>
</evidence>
<evidence type="ECO:0000269" key="5">
    <source>
    </source>
</evidence>
<evidence type="ECO:0000303" key="6">
    <source>
    </source>
</evidence>
<evidence type="ECO:0000303" key="7">
    <source>
    </source>
</evidence>
<evidence type="ECO:0000303" key="8">
    <source>
    </source>
</evidence>
<evidence type="ECO:0000305" key="9"/>
<proteinExistence type="evidence at protein level"/>
<keyword id="KW-0004">4Fe-4S</keyword>
<keyword id="KW-0010">Activator</keyword>
<keyword id="KW-0025">Alternative splicing</keyword>
<keyword id="KW-0238">DNA-binding</keyword>
<keyword id="KW-0378">Hydrolase</keyword>
<keyword id="KW-0408">Iron</keyword>
<keyword id="KW-0411">Iron-sulfur</keyword>
<keyword id="KW-0479">Metal-binding</keyword>
<keyword id="KW-0539">Nucleus</keyword>
<keyword id="KW-1185">Reference proteome</keyword>
<keyword id="KW-0804">Transcription</keyword>
<keyword id="KW-0805">Transcription regulation</keyword>
<protein>
    <recommendedName>
        <fullName>Transcriptional activator DEMETER</fullName>
        <ecNumber>3.2.2.-</ecNumber>
    </recommendedName>
    <alternativeName>
        <fullName>DNA glycosylase-related protein DME</fullName>
    </alternativeName>
</protein>
<name>DME_ARATH</name>
<comment type="function">
    <text evidence="3 4 5">Transcriptional activator involved in gene imprinting. Catalyzes the release of 5-methylcytosine (5-meC) from DNA by a glycosylase/lyase mechanism. Allows the expression of the maternal copy of the imprinted MEA gene before fertilization, possibly by antagonizing or suppressing DNA methylation on target promoter. Probably acts by nicking the MEA promoter. Required for stable reproducible patterns of floral and vegetative development.</text>
</comment>
<comment type="cofactor">
    <cofactor evidence="1">
        <name>[4Fe-4S] cluster</name>
        <dbReference type="ChEBI" id="CHEBI:49883"/>
    </cofactor>
    <text evidence="1">Binds 1 [4Fe-4S] cluster. The cluster does not appear to play a role in catalysis, but is probably involved in the proper positioning of the enzyme along the DNA strand.</text>
</comment>
<comment type="subcellular location">
    <subcellularLocation>
        <location>Nucleus</location>
    </subcellularLocation>
</comment>
<comment type="alternative products">
    <event type="alternative splicing"/>
    <isoform>
        <id>Q8LK56-3</id>
        <name>3</name>
        <sequence type="displayed"/>
    </isoform>
    <isoform>
        <id>Q8LK56-1</id>
        <name>1</name>
        <sequence type="described" ref="VSP_019283"/>
    </isoform>
    <isoform>
        <id>Q8LK56-2</id>
        <name>2</name>
        <sequence type="described" ref="VSP_007455"/>
    </isoform>
</comment>
<comment type="tissue specificity">
    <text>Mainly expressed in immature flower buds, then decreases as the flower matures. Expressed in the ovule carpels, but not expressed in pollen stamens. Expressed in developing and mature ovules (stages 12-14), then strongly decreases after fertilization.</text>
</comment>
<comment type="developmental stage">
    <text>Maternally expressed. Expressed primarily in the central cell of gametophyte before fertilization. Not expressed in endosperm and embryo after fertilization.</text>
</comment>
<comment type="domain">
    <text>The DEMETER domain, which is present in proteins of the subfamily, is related to the J-domain, but lacks some important conserved residues.</text>
</comment>
<comment type="miscellaneous">
    <text>Although strongly related to DNA glycosylase proteins, it differs from these proteins because of its large size and its unique N-terminal basic domain. The DNA repair function has not been proved and may not exist.</text>
</comment>
<comment type="similarity">
    <text evidence="9">Belongs to the DNA glycosylase family. DEMETER subfamily.</text>
</comment>
<comment type="sequence caution" evidence="9">
    <conflict type="erroneous gene model prediction">
        <sequence resource="EMBL-CDS" id="CAB85562"/>
    </conflict>
    <text>Was originally thought to correspond to three different genes At5g04560, At5g04570 and At5g04580.</text>
</comment>
<comment type="sequence caution" evidence="9">
    <conflict type="erroneous gene model prediction">
        <sequence resource="EMBL-CDS" id="CAB85563"/>
    </conflict>
    <text>Was originally thought to correspond to three different genes At5g04560, At5g04570 and At5g04580.</text>
</comment>
<comment type="sequence caution" evidence="9">
    <conflict type="erroneous gene model prediction">
        <sequence resource="EMBL-CDS" id="CAB85564"/>
    </conflict>
    <text>Was originally thought to correspond to three different genes At5g04560, At5g04570 and At5g04580.</text>
</comment>
<dbReference type="EC" id="3.2.2.-"/>
<dbReference type="EMBL" id="AF521596">
    <property type="protein sequence ID" value="AAM77215.1"/>
    <property type="molecule type" value="mRNA"/>
</dbReference>
<dbReference type="EMBL" id="DQ335243">
    <property type="protein sequence ID" value="ABC61677.1"/>
    <property type="molecule type" value="mRNA"/>
</dbReference>
<dbReference type="EMBL" id="AL162875">
    <property type="protein sequence ID" value="CAB85562.1"/>
    <property type="status" value="ALT_SEQ"/>
    <property type="molecule type" value="Genomic_DNA"/>
</dbReference>
<dbReference type="EMBL" id="AL162875">
    <property type="protein sequence ID" value="CAB85563.1"/>
    <property type="status" value="ALT_SEQ"/>
    <property type="molecule type" value="Genomic_DNA"/>
</dbReference>
<dbReference type="EMBL" id="AL162875">
    <property type="protein sequence ID" value="CAB85564.1"/>
    <property type="status" value="ALT_SEQ"/>
    <property type="molecule type" value="Genomic_DNA"/>
</dbReference>
<dbReference type="EMBL" id="CP002688">
    <property type="protein sequence ID" value="AED90760.1"/>
    <property type="molecule type" value="Genomic_DNA"/>
</dbReference>
<dbReference type="EMBL" id="CP002688">
    <property type="protein sequence ID" value="AED90761.1"/>
    <property type="molecule type" value="Genomic_DNA"/>
</dbReference>
<dbReference type="EMBL" id="CP002688">
    <property type="protein sequence ID" value="ANM69949.1"/>
    <property type="molecule type" value="Genomic_DNA"/>
</dbReference>
<dbReference type="EMBL" id="AK117994">
    <property type="protein sequence ID" value="BAC42629.1"/>
    <property type="molecule type" value="mRNA"/>
</dbReference>
<dbReference type="EMBL" id="BT005357">
    <property type="protein sequence ID" value="AAO63421.1"/>
    <property type="molecule type" value="mRNA"/>
</dbReference>
<dbReference type="PIR" id="T48452">
    <property type="entry name" value="T48452"/>
</dbReference>
<dbReference type="PIR" id="T48453">
    <property type="entry name" value="T48453"/>
</dbReference>
<dbReference type="PIR" id="T48454">
    <property type="entry name" value="T48454"/>
</dbReference>
<dbReference type="RefSeq" id="NP_001078527.1">
    <molecule id="Q8LK56-3"/>
    <property type="nucleotide sequence ID" value="NM_001085058.2"/>
</dbReference>
<dbReference type="RefSeq" id="NP_001331593.1">
    <molecule id="Q8LK56-1"/>
    <property type="nucleotide sequence ID" value="NM_001342781.1"/>
</dbReference>
<dbReference type="RefSeq" id="NP_196076.2">
    <molecule id="Q8LK56-1"/>
    <property type="nucleotide sequence ID" value="NM_120538.2"/>
</dbReference>
<dbReference type="SMR" id="Q8LK56"/>
<dbReference type="BioGRID" id="15614">
    <property type="interactions" value="7"/>
</dbReference>
<dbReference type="FunCoup" id="Q8LK56">
    <property type="interactions" value="1260"/>
</dbReference>
<dbReference type="STRING" id="3702.Q8LK56"/>
<dbReference type="GlyGen" id="Q8LK56">
    <property type="glycosylation" value="2 sites"/>
</dbReference>
<dbReference type="PaxDb" id="3702-AT5G04560.2"/>
<dbReference type="ProteomicsDB" id="222002">
    <molecule id="Q8LK56-3"/>
</dbReference>
<dbReference type="EnsemblPlants" id="AT5G04560.1">
    <molecule id="Q8LK56-1"/>
    <property type="protein sequence ID" value="AT5G04560.1"/>
    <property type="gene ID" value="AT5G04560"/>
</dbReference>
<dbReference type="EnsemblPlants" id="AT5G04560.2">
    <molecule id="Q8LK56-3"/>
    <property type="protein sequence ID" value="AT5G04560.2"/>
    <property type="gene ID" value="AT5G04560"/>
</dbReference>
<dbReference type="EnsemblPlants" id="AT5G04560.3">
    <molecule id="Q8LK56-1"/>
    <property type="protein sequence ID" value="AT5G04560.3"/>
    <property type="gene ID" value="AT5G04560"/>
</dbReference>
<dbReference type="GeneID" id="830335"/>
<dbReference type="Gramene" id="AT5G04560.1">
    <molecule id="Q8LK56-1"/>
    <property type="protein sequence ID" value="AT5G04560.1"/>
    <property type="gene ID" value="AT5G04560"/>
</dbReference>
<dbReference type="Gramene" id="AT5G04560.2">
    <molecule id="Q8LK56-3"/>
    <property type="protein sequence ID" value="AT5G04560.2"/>
    <property type="gene ID" value="AT5G04560"/>
</dbReference>
<dbReference type="Gramene" id="AT5G04560.3">
    <molecule id="Q8LK56-1"/>
    <property type="protein sequence ID" value="AT5G04560.3"/>
    <property type="gene ID" value="AT5G04560"/>
</dbReference>
<dbReference type="KEGG" id="ath:AT5G04560"/>
<dbReference type="Araport" id="AT5G04560"/>
<dbReference type="TAIR" id="AT5G04560">
    <property type="gene designation" value="DME"/>
</dbReference>
<dbReference type="eggNOG" id="ENOG502QQKH">
    <property type="taxonomic scope" value="Eukaryota"/>
</dbReference>
<dbReference type="InParanoid" id="Q8LK56"/>
<dbReference type="OMA" id="MYLMGTQ"/>
<dbReference type="PhylomeDB" id="Q8LK56"/>
<dbReference type="PRO" id="PR:Q8LK56"/>
<dbReference type="Proteomes" id="UP000006548">
    <property type="component" value="Chromosome 5"/>
</dbReference>
<dbReference type="ExpressionAtlas" id="Q8LK56">
    <property type="expression patterns" value="baseline and differential"/>
</dbReference>
<dbReference type="GO" id="GO:0005634">
    <property type="term" value="C:nucleus"/>
    <property type="evidence" value="ECO:0000250"/>
    <property type="project" value="TAIR"/>
</dbReference>
<dbReference type="GO" id="GO:0043078">
    <property type="term" value="C:polar nucleus"/>
    <property type="evidence" value="ECO:0000314"/>
    <property type="project" value="TAIR"/>
</dbReference>
<dbReference type="GO" id="GO:0051539">
    <property type="term" value="F:4 iron, 4 sulfur cluster binding"/>
    <property type="evidence" value="ECO:0007669"/>
    <property type="project" value="UniProtKB-KW"/>
</dbReference>
<dbReference type="GO" id="GO:0003677">
    <property type="term" value="F:DNA binding"/>
    <property type="evidence" value="ECO:0007669"/>
    <property type="project" value="UniProtKB-KW"/>
</dbReference>
<dbReference type="GO" id="GO:0035514">
    <property type="term" value="F:DNA demethylase activity"/>
    <property type="evidence" value="ECO:0007669"/>
    <property type="project" value="InterPro"/>
</dbReference>
<dbReference type="GO" id="GO:0019104">
    <property type="term" value="F:DNA N-glycosylase activity"/>
    <property type="evidence" value="ECO:0000314"/>
    <property type="project" value="TAIR"/>
</dbReference>
<dbReference type="GO" id="GO:0003906">
    <property type="term" value="F:DNA-(apurinic or apyrimidinic site) endonuclease activity"/>
    <property type="evidence" value="ECO:0000314"/>
    <property type="project" value="TAIR"/>
</dbReference>
<dbReference type="GO" id="GO:0046872">
    <property type="term" value="F:metal ion binding"/>
    <property type="evidence" value="ECO:0007669"/>
    <property type="project" value="UniProtKB-KW"/>
</dbReference>
<dbReference type="GO" id="GO:0032183">
    <property type="term" value="F:SUMO binding"/>
    <property type="evidence" value="ECO:0000353"/>
    <property type="project" value="TAIR"/>
</dbReference>
<dbReference type="GO" id="GO:0006284">
    <property type="term" value="P:base-excision repair"/>
    <property type="evidence" value="ECO:0007669"/>
    <property type="project" value="InterPro"/>
</dbReference>
<dbReference type="GO" id="GO:0141166">
    <property type="term" value="P:chromosomal 5-methylcytosine DNA demethylation pathway"/>
    <property type="evidence" value="ECO:0007669"/>
    <property type="project" value="InterPro"/>
</dbReference>
<dbReference type="GO" id="GO:0009793">
    <property type="term" value="P:embryo development ending in seed dormancy"/>
    <property type="evidence" value="ECO:0000315"/>
    <property type="project" value="TAIR"/>
</dbReference>
<dbReference type="CDD" id="cd00056">
    <property type="entry name" value="ENDO3c"/>
    <property type="match status" value="1"/>
</dbReference>
<dbReference type="FunFam" id="1.10.1670.10:FF:000004">
    <property type="entry name" value="DNA glycosylase/AP lyase ROS1"/>
    <property type="match status" value="1"/>
</dbReference>
<dbReference type="Gene3D" id="1.10.1670.10">
    <property type="entry name" value="Helix-hairpin-Helix base-excision DNA repair enzymes (C-terminal)"/>
    <property type="match status" value="1"/>
</dbReference>
<dbReference type="Gene3D" id="1.10.340.30">
    <property type="entry name" value="Hypothetical protein, domain 2"/>
    <property type="match status" value="1"/>
</dbReference>
<dbReference type="InterPro" id="IPR044811">
    <property type="entry name" value="DME/ROS1"/>
</dbReference>
<dbReference type="InterPro" id="IPR011257">
    <property type="entry name" value="DNA_glycosylase"/>
</dbReference>
<dbReference type="InterPro" id="IPR003651">
    <property type="entry name" value="Endonuclease3_FeS-loop_motif"/>
</dbReference>
<dbReference type="InterPro" id="IPR003265">
    <property type="entry name" value="HhH-GPD_domain"/>
</dbReference>
<dbReference type="InterPro" id="IPR023170">
    <property type="entry name" value="HhH_base_excis_C"/>
</dbReference>
<dbReference type="InterPro" id="IPR028924">
    <property type="entry name" value="Perm-CXXC"/>
</dbReference>
<dbReference type="InterPro" id="IPR028925">
    <property type="entry name" value="RRM_DME"/>
</dbReference>
<dbReference type="PANTHER" id="PTHR46213">
    <property type="entry name" value="TRANSCRIPTIONAL ACTIVATOR DEMETER"/>
    <property type="match status" value="1"/>
</dbReference>
<dbReference type="PANTHER" id="PTHR46213:SF27">
    <property type="entry name" value="TRANSCRIPTIONAL ACTIVATOR DEMETER"/>
    <property type="match status" value="1"/>
</dbReference>
<dbReference type="Pfam" id="PF15629">
    <property type="entry name" value="Perm-CXXC"/>
    <property type="match status" value="1"/>
</dbReference>
<dbReference type="Pfam" id="PF15628">
    <property type="entry name" value="RRM_DME"/>
    <property type="match status" value="1"/>
</dbReference>
<dbReference type="SMART" id="SM00478">
    <property type="entry name" value="ENDO3c"/>
    <property type="match status" value="1"/>
</dbReference>
<dbReference type="SMART" id="SM00525">
    <property type="entry name" value="FES"/>
    <property type="match status" value="1"/>
</dbReference>
<dbReference type="SUPFAM" id="SSF48150">
    <property type="entry name" value="DNA-glycosylase"/>
    <property type="match status" value="1"/>
</dbReference>